<proteinExistence type="inferred from homology"/>
<organism>
    <name type="scientific">Thermosynechococcus vestitus (strain NIES-2133 / IAM M-273 / BP-1)</name>
    <dbReference type="NCBI Taxonomy" id="197221"/>
    <lineage>
        <taxon>Bacteria</taxon>
        <taxon>Bacillati</taxon>
        <taxon>Cyanobacteriota</taxon>
        <taxon>Cyanophyceae</taxon>
        <taxon>Acaryochloridales</taxon>
        <taxon>Thermosynechococcaceae</taxon>
        <taxon>Thermosynechococcus</taxon>
    </lineage>
</organism>
<comment type="catalytic activity">
    <reaction evidence="1">
        <text>5-amino-1-(5-phospho-D-ribosyl)imidazole-4-carboxylate + L-aspartate + ATP = (2S)-2-[5-amino-1-(5-phospho-beta-D-ribosyl)imidazole-4-carboxamido]succinate + ADP + phosphate + 2 H(+)</text>
        <dbReference type="Rhea" id="RHEA:22628"/>
        <dbReference type="ChEBI" id="CHEBI:15378"/>
        <dbReference type="ChEBI" id="CHEBI:29991"/>
        <dbReference type="ChEBI" id="CHEBI:30616"/>
        <dbReference type="ChEBI" id="CHEBI:43474"/>
        <dbReference type="ChEBI" id="CHEBI:58443"/>
        <dbReference type="ChEBI" id="CHEBI:77657"/>
        <dbReference type="ChEBI" id="CHEBI:456216"/>
        <dbReference type="EC" id="6.3.2.6"/>
    </reaction>
</comment>
<comment type="pathway">
    <text evidence="1">Purine metabolism; IMP biosynthesis via de novo pathway; 5-amino-1-(5-phospho-D-ribosyl)imidazole-4-carboxamide from 5-amino-1-(5-phospho-D-ribosyl)imidazole-4-carboxylate: step 1/2.</text>
</comment>
<comment type="similarity">
    <text evidence="1">Belongs to the SAICAR synthetase family.</text>
</comment>
<name>PUR7_THEVB</name>
<evidence type="ECO:0000255" key="1">
    <source>
        <dbReference type="HAMAP-Rule" id="MF_00137"/>
    </source>
</evidence>
<dbReference type="EC" id="6.3.2.6" evidence="1"/>
<dbReference type="EMBL" id="BA000039">
    <property type="protein sequence ID" value="BAC09048.1"/>
    <property type="molecule type" value="Genomic_DNA"/>
</dbReference>
<dbReference type="RefSeq" id="NP_682286.1">
    <property type="nucleotide sequence ID" value="NC_004113.1"/>
</dbReference>
<dbReference type="RefSeq" id="WP_011057336.1">
    <property type="nucleotide sequence ID" value="NC_004113.1"/>
</dbReference>
<dbReference type="SMR" id="Q8DIT5"/>
<dbReference type="STRING" id="197221.gene:10748096"/>
<dbReference type="EnsemblBacteria" id="BAC09048">
    <property type="protein sequence ID" value="BAC09048"/>
    <property type="gene ID" value="BAC09048"/>
</dbReference>
<dbReference type="KEGG" id="tel:tll1496"/>
<dbReference type="PATRIC" id="fig|197221.4.peg.1570"/>
<dbReference type="eggNOG" id="COG0152">
    <property type="taxonomic scope" value="Bacteria"/>
</dbReference>
<dbReference type="UniPathway" id="UPA00074">
    <property type="reaction ID" value="UER00131"/>
</dbReference>
<dbReference type="Proteomes" id="UP000000440">
    <property type="component" value="Chromosome"/>
</dbReference>
<dbReference type="GO" id="GO:0005524">
    <property type="term" value="F:ATP binding"/>
    <property type="evidence" value="ECO:0007669"/>
    <property type="project" value="UniProtKB-KW"/>
</dbReference>
<dbReference type="GO" id="GO:0004639">
    <property type="term" value="F:phosphoribosylaminoimidazolesuccinocarboxamide synthase activity"/>
    <property type="evidence" value="ECO:0007669"/>
    <property type="project" value="UniProtKB-UniRule"/>
</dbReference>
<dbReference type="GO" id="GO:0006189">
    <property type="term" value="P:'de novo' IMP biosynthetic process"/>
    <property type="evidence" value="ECO:0007669"/>
    <property type="project" value="UniProtKB-UniRule"/>
</dbReference>
<dbReference type="GO" id="GO:0009236">
    <property type="term" value="P:cobalamin biosynthetic process"/>
    <property type="evidence" value="ECO:0007669"/>
    <property type="project" value="InterPro"/>
</dbReference>
<dbReference type="CDD" id="cd01415">
    <property type="entry name" value="SAICAR_synt_PurC"/>
    <property type="match status" value="1"/>
</dbReference>
<dbReference type="FunFam" id="3.30.470.20:FF:000006">
    <property type="entry name" value="Phosphoribosylaminoimidazole-succinocarboxamide synthase"/>
    <property type="match status" value="1"/>
</dbReference>
<dbReference type="Gene3D" id="3.30.470.20">
    <property type="entry name" value="ATP-grasp fold, B domain"/>
    <property type="match status" value="1"/>
</dbReference>
<dbReference type="Gene3D" id="3.30.200.20">
    <property type="entry name" value="Phosphorylase Kinase, domain 1"/>
    <property type="match status" value="1"/>
</dbReference>
<dbReference type="HAMAP" id="MF_00137">
    <property type="entry name" value="SAICAR_synth"/>
    <property type="match status" value="1"/>
</dbReference>
<dbReference type="InterPro" id="IPR028923">
    <property type="entry name" value="SAICAR_synt/ADE2_N"/>
</dbReference>
<dbReference type="InterPro" id="IPR033934">
    <property type="entry name" value="SAICAR_synt_PurC"/>
</dbReference>
<dbReference type="InterPro" id="IPR001636">
    <property type="entry name" value="SAICAR_synth"/>
</dbReference>
<dbReference type="InterPro" id="IPR050089">
    <property type="entry name" value="SAICAR_synthetase"/>
</dbReference>
<dbReference type="InterPro" id="IPR018236">
    <property type="entry name" value="SAICAR_synthetase_CS"/>
</dbReference>
<dbReference type="NCBIfam" id="TIGR00081">
    <property type="entry name" value="purC"/>
    <property type="match status" value="1"/>
</dbReference>
<dbReference type="PANTHER" id="PTHR43599">
    <property type="entry name" value="MULTIFUNCTIONAL PROTEIN ADE2"/>
    <property type="match status" value="1"/>
</dbReference>
<dbReference type="PANTHER" id="PTHR43599:SF3">
    <property type="entry name" value="SI:DKEY-6E2.2"/>
    <property type="match status" value="1"/>
</dbReference>
<dbReference type="Pfam" id="PF01259">
    <property type="entry name" value="SAICAR_synt"/>
    <property type="match status" value="1"/>
</dbReference>
<dbReference type="SUPFAM" id="SSF56104">
    <property type="entry name" value="SAICAR synthase-like"/>
    <property type="match status" value="1"/>
</dbReference>
<dbReference type="PROSITE" id="PS01057">
    <property type="entry name" value="SAICAR_SYNTHETASE_1"/>
    <property type="match status" value="1"/>
</dbReference>
<dbReference type="PROSITE" id="PS01058">
    <property type="entry name" value="SAICAR_SYNTHETASE_2"/>
    <property type="match status" value="1"/>
</dbReference>
<keyword id="KW-0067">ATP-binding</keyword>
<keyword id="KW-0436">Ligase</keyword>
<keyword id="KW-0547">Nucleotide-binding</keyword>
<keyword id="KW-0658">Purine biosynthesis</keyword>
<keyword id="KW-1185">Reference proteome</keyword>
<gene>
    <name evidence="1" type="primary">purC</name>
    <name type="ordered locus">tll1496</name>
</gene>
<feature type="chain" id="PRO_0000100888" description="Phosphoribosylaminoimidazole-succinocarboxamide synthase">
    <location>
        <begin position="1"/>
        <end position="243"/>
    </location>
</feature>
<reference key="1">
    <citation type="journal article" date="2002" name="DNA Res.">
        <title>Complete genome structure of the thermophilic cyanobacterium Thermosynechococcus elongatus BP-1.</title>
        <authorList>
            <person name="Nakamura Y."/>
            <person name="Kaneko T."/>
            <person name="Sato S."/>
            <person name="Ikeuchi M."/>
            <person name="Katoh H."/>
            <person name="Sasamoto S."/>
            <person name="Watanabe A."/>
            <person name="Iriguchi M."/>
            <person name="Kawashima K."/>
            <person name="Kimura T."/>
            <person name="Kishida Y."/>
            <person name="Kiyokawa C."/>
            <person name="Kohara M."/>
            <person name="Matsumoto M."/>
            <person name="Matsuno A."/>
            <person name="Nakazaki N."/>
            <person name="Shimpo S."/>
            <person name="Sugimoto M."/>
            <person name="Takeuchi C."/>
            <person name="Yamada M."/>
            <person name="Tabata S."/>
        </authorList>
    </citation>
    <scope>NUCLEOTIDE SEQUENCE [LARGE SCALE GENOMIC DNA]</scope>
    <source>
        <strain>NIES-2133 / IAM M-273 / BP-1</strain>
    </source>
</reference>
<protein>
    <recommendedName>
        <fullName evidence="1">Phosphoribosylaminoimidazole-succinocarboxamide synthase</fullName>
        <ecNumber evidence="1">6.3.2.6</ecNumber>
    </recommendedName>
    <alternativeName>
        <fullName evidence="1">SAICAR synthetase</fullName>
    </alternativeName>
</protein>
<accession>Q8DIT5</accession>
<sequence length="243" mass="27212">MTQFSPLYEGKAKIIYATADPDVLLAEFKDDATAFNAQKRGSIQNKGVMNCAIASHLFQYLAAQGITNHFIAQVAPNKMHIRRVEIIPLEVVVRNQAAGSLCRQTGLPLGLALNPPLVEFYLKNDDLGDPLLTPDRLRLLQVATDEEVIQIRQMALAVNTHLSHFFAECGITLVDFKLEFGRRPTGEILLADEISPDSCRLWNRDESDPEKRILDKDRFRQDLGAIEEAYALVMQRVLAHSVS</sequence>